<feature type="signal peptide" evidence="3">
    <location>
        <begin position="1"/>
        <end position="35"/>
    </location>
</feature>
<feature type="chain" id="PRO_0000017652" description="Agglutinin-2">
    <location>
        <begin position="36"/>
        <end position="290"/>
    </location>
</feature>
<feature type="binding site" evidence="1">
    <location>
        <position position="165"/>
    </location>
    <ligand>
        <name>Mn(2+)</name>
        <dbReference type="ChEBI" id="CHEBI:29035"/>
    </ligand>
</feature>
<feature type="binding site" evidence="1">
    <location>
        <position position="167"/>
    </location>
    <ligand>
        <name>Ca(2+)</name>
        <dbReference type="ChEBI" id="CHEBI:29108"/>
    </ligand>
</feature>
<feature type="binding site" evidence="1">
    <location>
        <position position="167"/>
    </location>
    <ligand>
        <name>Mn(2+)</name>
        <dbReference type="ChEBI" id="CHEBI:29035"/>
    </ligand>
</feature>
<feature type="binding site" evidence="1">
    <location>
        <position position="171"/>
    </location>
    <ligand>
        <name>Ca(2+)</name>
        <dbReference type="ChEBI" id="CHEBI:29108"/>
    </ligand>
</feature>
<feature type="binding site" evidence="1">
    <location>
        <position position="175"/>
    </location>
    <ligand>
        <name>Ca(2+)</name>
        <dbReference type="ChEBI" id="CHEBI:29108"/>
    </ligand>
</feature>
<feature type="binding site" evidence="1">
    <location>
        <position position="175"/>
    </location>
    <ligand>
        <name>Mn(2+)</name>
        <dbReference type="ChEBI" id="CHEBI:29035"/>
    </ligand>
</feature>
<feature type="binding site" evidence="1">
    <location>
        <position position="180"/>
    </location>
    <ligand>
        <name>Mn(2+)</name>
        <dbReference type="ChEBI" id="CHEBI:29035"/>
    </ligand>
</feature>
<feature type="glycosylation site" description="N-linked (GlcNAc...) asparagine" evidence="2">
    <location>
        <position position="155"/>
    </location>
</feature>
<feature type="glycosylation site" description="N-linked (GlcNAc...) asparagine" evidence="2">
    <location>
        <position position="200"/>
    </location>
</feature>
<feature type="sequence conflict" description="In Ref. 1; AA sequence." evidence="4" ref="1">
    <original>RPDQR</original>
    <variation>SPNEA</variation>
    <location>
        <begin position="47"/>
        <end position="51"/>
    </location>
</feature>
<reference key="1">
    <citation type="journal article" date="1995" name="Plant Mol. Biol.">
        <title>A lectin and a lectin-related protein are the two most prominent proteins in the bark of yellow wood (Cladrastis lutea).</title>
        <authorList>
            <person name="van Damme E.J.M."/>
            <person name="Barre A."/>
            <person name="Bemer V."/>
            <person name="Rouge P."/>
            <person name="van Leuven F."/>
            <person name="Peumans W.J."/>
        </authorList>
    </citation>
    <scope>NUCLEOTIDE SEQUENCE [MRNA]</scope>
    <scope>PROTEIN SEQUENCE OF 36-54</scope>
    <source>
        <tissue>Bark</tissue>
    </source>
</reference>
<sequence length="290" mass="32004">MAISNTNLLQTKKPISLPLLAFITLFLMLLNRVNSSDSLSFTFDNFRPDQRDLILQGDAKISSGGDSLQLTKTDTSGKPVRGSVGRALYYTPLHLWDSSTNRLASFQTTFTFVLSSPTNNPGDGIAFFIAPPETTIPPGSSGGLLGLFSPDNALNNSLNQIVAVEFDTFVNNNWDPSHRHIGIDVNTIKSSATVRWQRENGSLATAQISYNSDTKKLSVVSSYPNTQANEDYTVSYDVDLKTELPEWVRVGFSGSTGGYVQNHNILSWTFNSNLQSSRAKKEDIYIKRYV</sequence>
<protein>
    <recommendedName>
        <fullName>Agglutinin-2</fullName>
    </recommendedName>
    <alternativeName>
        <fullName>Agglutinin II</fullName>
    </alternativeName>
    <alternativeName>
        <fullName>ClAII</fullName>
    </alternativeName>
    <alternativeName>
        <fullName>LecClAII</fullName>
    </alternativeName>
</protein>
<comment type="function">
    <text>Mannose/glucose binding bark lectin.</text>
</comment>
<comment type="function">
    <text>Bark lectins are storage proteins that probably maintain stocks of nitrogen during dormant period. Self-aggregatable molecules that can bind their own carbohydrate side chains. They could also play a role in the plant's defense against phytophagous invertebrates or herbivorous higher animals.</text>
</comment>
<comment type="subunit">
    <text>Homotetramer.</text>
</comment>
<comment type="miscellaneous">
    <text evidence="1">Binds one manganese (or another transition metal) ion and one calcium ion. The metal ions are essential for the saccharide-binding and cell-agglutinating activities (By similarity).</text>
</comment>
<comment type="similarity">
    <text evidence="4">Belongs to the leguminous lectin family.</text>
</comment>
<dbReference type="EMBL" id="U21959">
    <property type="protein sequence ID" value="AAC49137.1"/>
    <property type="molecule type" value="mRNA"/>
</dbReference>
<dbReference type="PIR" id="S66357">
    <property type="entry name" value="S66357"/>
</dbReference>
<dbReference type="SMR" id="Q39529"/>
<dbReference type="GO" id="GO:0005537">
    <property type="term" value="F:D-mannose binding"/>
    <property type="evidence" value="ECO:0007669"/>
    <property type="project" value="UniProtKB-KW"/>
</dbReference>
<dbReference type="GO" id="GO:0046872">
    <property type="term" value="F:metal ion binding"/>
    <property type="evidence" value="ECO:0007669"/>
    <property type="project" value="UniProtKB-KW"/>
</dbReference>
<dbReference type="CDD" id="cd06899">
    <property type="entry name" value="lectin_legume_LecRK_Arcelin_ConA"/>
    <property type="match status" value="1"/>
</dbReference>
<dbReference type="FunFam" id="2.60.120.200:FF:000237">
    <property type="entry name" value="Mannose/glucose-specific lectin"/>
    <property type="match status" value="1"/>
</dbReference>
<dbReference type="Gene3D" id="2.60.120.200">
    <property type="match status" value="1"/>
</dbReference>
<dbReference type="InterPro" id="IPR013320">
    <property type="entry name" value="ConA-like_dom_sf"/>
</dbReference>
<dbReference type="InterPro" id="IPR016363">
    <property type="entry name" value="L-lectin"/>
</dbReference>
<dbReference type="InterPro" id="IPR000985">
    <property type="entry name" value="Lectin_LegA_CS"/>
</dbReference>
<dbReference type="InterPro" id="IPR019825">
    <property type="entry name" value="Lectin_legB_Mn/Ca_BS"/>
</dbReference>
<dbReference type="InterPro" id="IPR001220">
    <property type="entry name" value="Legume_lectin_dom"/>
</dbReference>
<dbReference type="InterPro" id="IPR050258">
    <property type="entry name" value="Leguminous_Lectin"/>
</dbReference>
<dbReference type="PANTHER" id="PTHR32401">
    <property type="entry name" value="CONCANAVALIN A-LIKE LECTIN FAMILY PROTEIN"/>
    <property type="match status" value="1"/>
</dbReference>
<dbReference type="PANTHER" id="PTHR32401:SF47">
    <property type="entry name" value="LEGUME LECTIN DOMAIN-CONTAINING PROTEIN"/>
    <property type="match status" value="1"/>
</dbReference>
<dbReference type="Pfam" id="PF00139">
    <property type="entry name" value="Lectin_legB"/>
    <property type="match status" value="1"/>
</dbReference>
<dbReference type="PIRSF" id="PIRSF002690">
    <property type="entry name" value="L-type_lectin_plant"/>
    <property type="match status" value="1"/>
</dbReference>
<dbReference type="SUPFAM" id="SSF49899">
    <property type="entry name" value="Concanavalin A-like lectins/glucanases"/>
    <property type="match status" value="1"/>
</dbReference>
<dbReference type="PROSITE" id="PS00308">
    <property type="entry name" value="LECTIN_LEGUME_ALPHA"/>
    <property type="match status" value="1"/>
</dbReference>
<dbReference type="PROSITE" id="PS00307">
    <property type="entry name" value="LECTIN_LEGUME_BETA"/>
    <property type="match status" value="1"/>
</dbReference>
<keyword id="KW-0106">Calcium</keyword>
<keyword id="KW-0903">Direct protein sequencing</keyword>
<keyword id="KW-0325">Glycoprotein</keyword>
<keyword id="KW-0430">Lectin</keyword>
<keyword id="KW-0464">Manganese</keyword>
<keyword id="KW-0465">Mannose-binding</keyword>
<keyword id="KW-0479">Metal-binding</keyword>
<keyword id="KW-0732">Signal</keyword>
<evidence type="ECO:0000250" key="1"/>
<evidence type="ECO:0000255" key="2"/>
<evidence type="ECO:0000269" key="3">
    <source>
    </source>
</evidence>
<evidence type="ECO:0000305" key="4"/>
<accession>Q39529</accession>
<proteinExistence type="evidence at protein level"/>
<organism>
    <name type="scientific">Cladrastis kentukea</name>
    <name type="common">Yellow wood</name>
    <name type="synonym">Cladrastis lutea</name>
    <dbReference type="NCBI Taxonomy" id="38412"/>
    <lineage>
        <taxon>Eukaryota</taxon>
        <taxon>Viridiplantae</taxon>
        <taxon>Streptophyta</taxon>
        <taxon>Embryophyta</taxon>
        <taxon>Tracheophyta</taxon>
        <taxon>Spermatophyta</taxon>
        <taxon>Magnoliopsida</taxon>
        <taxon>eudicotyledons</taxon>
        <taxon>Gunneridae</taxon>
        <taxon>Pentapetalae</taxon>
        <taxon>rosids</taxon>
        <taxon>fabids</taxon>
        <taxon>Fabales</taxon>
        <taxon>Fabaceae</taxon>
        <taxon>Papilionoideae</taxon>
        <taxon>Cladrastis clade</taxon>
        <taxon>Cladrastis</taxon>
    </lineage>
</organism>
<name>LEC2_CLAKE</name>